<sequence length="245" mass="26584">MSTEPIAVSITGLRKSFGDKTVLDGVDLTIRRGEFVVLLGPSGTGKTTLLRLLTGLEVPDAGEVLVPGRRTTVYQEPRLIPSKRVLANVLVGLRRTRSNRAAGLAALAEVQLDGKADQWPATLSGGEAQRAALARALVREPELLLLDEPFAALDALTRLRMQDLVGDLVARHRPAVLMVTHDVDEAVRLADRVIVLDRGRFAVDTAITAPRPRERADPDILRYQTEFLAHLGVGGSDRRPIRSAS</sequence>
<dbReference type="EC" id="7.6.2.14" evidence="1"/>
<dbReference type="EMBL" id="AP006618">
    <property type="protein sequence ID" value="BAD55996.1"/>
    <property type="molecule type" value="Genomic_DNA"/>
</dbReference>
<dbReference type="RefSeq" id="WP_011207681.1">
    <property type="nucleotide sequence ID" value="NC_006361.1"/>
</dbReference>
<dbReference type="SMR" id="Q5Z0P5"/>
<dbReference type="STRING" id="247156.NFA_11510"/>
<dbReference type="GeneID" id="61131974"/>
<dbReference type="KEGG" id="nfa:NFA_11510"/>
<dbReference type="eggNOG" id="COG1116">
    <property type="taxonomic scope" value="Bacteria"/>
</dbReference>
<dbReference type="HOGENOM" id="CLU_000604_1_22_11"/>
<dbReference type="OrthoDB" id="8773773at2"/>
<dbReference type="Proteomes" id="UP000006820">
    <property type="component" value="Chromosome"/>
</dbReference>
<dbReference type="GO" id="GO:0005886">
    <property type="term" value="C:plasma membrane"/>
    <property type="evidence" value="ECO:0007669"/>
    <property type="project" value="UniProtKB-SubCell"/>
</dbReference>
<dbReference type="GO" id="GO:0005524">
    <property type="term" value="F:ATP binding"/>
    <property type="evidence" value="ECO:0007669"/>
    <property type="project" value="UniProtKB-KW"/>
</dbReference>
<dbReference type="GO" id="GO:0016887">
    <property type="term" value="F:ATP hydrolysis activity"/>
    <property type="evidence" value="ECO:0007669"/>
    <property type="project" value="InterPro"/>
</dbReference>
<dbReference type="Gene3D" id="3.40.50.300">
    <property type="entry name" value="P-loop containing nucleotide triphosphate hydrolases"/>
    <property type="match status" value="1"/>
</dbReference>
<dbReference type="InterPro" id="IPR003593">
    <property type="entry name" value="AAA+_ATPase"/>
</dbReference>
<dbReference type="InterPro" id="IPR003439">
    <property type="entry name" value="ABC_transporter-like_ATP-bd"/>
</dbReference>
<dbReference type="InterPro" id="IPR017871">
    <property type="entry name" value="ABC_transporter-like_CS"/>
</dbReference>
<dbReference type="InterPro" id="IPR050166">
    <property type="entry name" value="ABC_transporter_ATP-bind"/>
</dbReference>
<dbReference type="InterPro" id="IPR027417">
    <property type="entry name" value="P-loop_NTPase"/>
</dbReference>
<dbReference type="PANTHER" id="PTHR42788:SF17">
    <property type="entry name" value="ALIPHATIC SULFONATES IMPORT ATP-BINDING PROTEIN SSUB"/>
    <property type="match status" value="1"/>
</dbReference>
<dbReference type="PANTHER" id="PTHR42788">
    <property type="entry name" value="TAURINE IMPORT ATP-BINDING PROTEIN-RELATED"/>
    <property type="match status" value="1"/>
</dbReference>
<dbReference type="Pfam" id="PF00005">
    <property type="entry name" value="ABC_tran"/>
    <property type="match status" value="1"/>
</dbReference>
<dbReference type="SMART" id="SM00382">
    <property type="entry name" value="AAA"/>
    <property type="match status" value="1"/>
</dbReference>
<dbReference type="SUPFAM" id="SSF52540">
    <property type="entry name" value="P-loop containing nucleoside triphosphate hydrolases"/>
    <property type="match status" value="1"/>
</dbReference>
<dbReference type="PROSITE" id="PS00211">
    <property type="entry name" value="ABC_TRANSPORTER_1"/>
    <property type="match status" value="1"/>
</dbReference>
<dbReference type="PROSITE" id="PS50893">
    <property type="entry name" value="ABC_TRANSPORTER_2"/>
    <property type="match status" value="1"/>
</dbReference>
<dbReference type="PROSITE" id="PS51291">
    <property type="entry name" value="SSUB"/>
    <property type="match status" value="1"/>
</dbReference>
<evidence type="ECO:0000255" key="1">
    <source>
        <dbReference type="HAMAP-Rule" id="MF_01724"/>
    </source>
</evidence>
<gene>
    <name evidence="1" type="primary">ssuB1</name>
    <name type="ordered locus">NFA_11510</name>
</gene>
<keyword id="KW-0067">ATP-binding</keyword>
<keyword id="KW-1003">Cell membrane</keyword>
<keyword id="KW-0472">Membrane</keyword>
<keyword id="KW-0547">Nucleotide-binding</keyword>
<keyword id="KW-1185">Reference proteome</keyword>
<keyword id="KW-1278">Translocase</keyword>
<keyword id="KW-0813">Transport</keyword>
<organism>
    <name type="scientific">Nocardia farcinica (strain IFM 10152)</name>
    <dbReference type="NCBI Taxonomy" id="247156"/>
    <lineage>
        <taxon>Bacteria</taxon>
        <taxon>Bacillati</taxon>
        <taxon>Actinomycetota</taxon>
        <taxon>Actinomycetes</taxon>
        <taxon>Mycobacteriales</taxon>
        <taxon>Nocardiaceae</taxon>
        <taxon>Nocardia</taxon>
    </lineage>
</organism>
<feature type="chain" id="PRO_0000279922" description="Aliphatic sulfonates import ATP-binding protein SsuB 1">
    <location>
        <begin position="1"/>
        <end position="245"/>
    </location>
</feature>
<feature type="domain" description="ABC transporter" evidence="1">
    <location>
        <begin position="8"/>
        <end position="223"/>
    </location>
</feature>
<feature type="binding site" evidence="1">
    <location>
        <begin position="40"/>
        <end position="47"/>
    </location>
    <ligand>
        <name>ATP</name>
        <dbReference type="ChEBI" id="CHEBI:30616"/>
    </ligand>
</feature>
<reference key="1">
    <citation type="journal article" date="2004" name="Proc. Natl. Acad. Sci. U.S.A.">
        <title>The complete genomic sequence of Nocardia farcinica IFM 10152.</title>
        <authorList>
            <person name="Ishikawa J."/>
            <person name="Yamashita A."/>
            <person name="Mikami Y."/>
            <person name="Hoshino Y."/>
            <person name="Kurita H."/>
            <person name="Hotta K."/>
            <person name="Shiba T."/>
            <person name="Hattori M."/>
        </authorList>
    </citation>
    <scope>NUCLEOTIDE SEQUENCE [LARGE SCALE GENOMIC DNA]</scope>
    <source>
        <strain>IFM 10152</strain>
    </source>
</reference>
<name>SSUB1_NOCFA</name>
<accession>Q5Z0P5</accession>
<protein>
    <recommendedName>
        <fullName evidence="1">Aliphatic sulfonates import ATP-binding protein SsuB 1</fullName>
        <ecNumber evidence="1">7.6.2.14</ecNumber>
    </recommendedName>
</protein>
<comment type="function">
    <text evidence="1">Part of the ABC transporter complex SsuABC involved in aliphatic sulfonates import. Responsible for energy coupling to the transport system.</text>
</comment>
<comment type="catalytic activity">
    <reaction evidence="1">
        <text>ATP + H2O + aliphatic sulfonate-[sulfonate-binding protein]Side 1 = ADP + phosphate + aliphatic sulfonateSide 2 + [sulfonate-binding protein]Side 1.</text>
        <dbReference type="EC" id="7.6.2.14"/>
    </reaction>
</comment>
<comment type="subunit">
    <text evidence="1">The complex is composed of two ATP-binding proteins (SsuB), two transmembrane proteins (SsuC) and a solute-binding protein (SsuA).</text>
</comment>
<comment type="subcellular location">
    <subcellularLocation>
        <location evidence="1">Cell membrane</location>
        <topology evidence="1">Peripheral membrane protein</topology>
    </subcellularLocation>
</comment>
<comment type="similarity">
    <text evidence="1">Belongs to the ABC transporter superfamily. Aliphatic sulfonates importer (TC 3.A.1.17.2) family.</text>
</comment>
<proteinExistence type="inferred from homology"/>